<comment type="function">
    <text evidence="1">One of the primary rRNA binding proteins, it binds directly to 16S rRNA where it nucleates assembly of the head domain of the 30S subunit.</text>
</comment>
<comment type="subunit">
    <text>Part of the 30S ribosomal subunit.</text>
</comment>
<comment type="subcellular location">
    <subcellularLocation>
        <location>Plastid</location>
        <location>Chloroplast</location>
    </subcellularLocation>
</comment>
<comment type="RNA editing">
    <location>
        <position position="21" evidence="3 4"/>
    </location>
    <location>
        <position position="71" evidence="3 4"/>
    </location>
    <location>
        <position position="86" evidence="3 4"/>
    </location>
    <location>
        <position position="108" evidence="3 4"/>
    </location>
    <location>
        <position position="124" evidence="3 4"/>
    </location>
    <location>
        <position position="127" evidence="3 4"/>
    </location>
    <text>The nonsense codons at positions 21 and 86 are modified to sense codons.</text>
</comment>
<comment type="similarity">
    <text evidence="5">Belongs to the universal ribosomal protein uS7 family.</text>
</comment>
<proteinExistence type="evidence at transcript level"/>
<geneLocation type="chloroplast"/>
<accession>Q85B41</accession>
<name>RR7_ANTAG</name>
<keyword id="KW-0150">Chloroplast</keyword>
<keyword id="KW-0934">Plastid</keyword>
<keyword id="KW-0687">Ribonucleoprotein</keyword>
<keyword id="KW-0689">Ribosomal protein</keyword>
<keyword id="KW-0691">RNA editing</keyword>
<keyword id="KW-0694">RNA-binding</keyword>
<keyword id="KW-0699">rRNA-binding</keyword>
<reference key="1">
    <citation type="journal article" date="2003" name="Nucleic Acids Res.">
        <title>The complete nucleotide sequence of the hornwort (Anthoceros formosae) chloroplast genome: insight into the earliest land plants.</title>
        <authorList>
            <person name="Kugita M."/>
            <person name="Kaneko A."/>
            <person name="Yamamoto Y."/>
            <person name="Takeya Y."/>
            <person name="Matsumoto T."/>
            <person name="Yoshinaga K."/>
        </authorList>
    </citation>
    <scope>NUCLEOTIDE SEQUENCE [LARGE SCALE GENOMIC DNA]</scope>
    <scope>RNA EDITING</scope>
</reference>
<reference key="2">
    <citation type="journal article" date="2003" name="Nucleic Acids Res.">
        <title>RNA editing in hornwort chloroplasts makes more than half the genes functional.</title>
        <authorList>
            <person name="Kugita M."/>
            <person name="Yamamoto Y."/>
            <person name="Fujikawa T."/>
            <person name="Matsumoto T."/>
            <person name="Yoshinaga K."/>
        </authorList>
    </citation>
    <scope>NUCLEOTIDE SEQUENCE [MRNA]</scope>
    <scope>RNA EDITING</scope>
    <source>
        <tissue>Thallus</tissue>
    </source>
</reference>
<dbReference type="EMBL" id="AB086179">
    <property type="protein sequence ID" value="BAC55394.1"/>
    <property type="molecule type" value="Genomic_DNA"/>
</dbReference>
<dbReference type="EMBL" id="AB086179">
    <property type="protein sequence ID" value="BAC55412.1"/>
    <property type="molecule type" value="Genomic_DNA"/>
</dbReference>
<dbReference type="EMBL" id="AB087476">
    <property type="protein sequence ID" value="BAC55495.1"/>
    <property type="molecule type" value="mRNA"/>
</dbReference>
<dbReference type="SMR" id="Q85B41"/>
<dbReference type="GO" id="GO:0009507">
    <property type="term" value="C:chloroplast"/>
    <property type="evidence" value="ECO:0007669"/>
    <property type="project" value="UniProtKB-SubCell"/>
</dbReference>
<dbReference type="GO" id="GO:0015935">
    <property type="term" value="C:small ribosomal subunit"/>
    <property type="evidence" value="ECO:0007669"/>
    <property type="project" value="InterPro"/>
</dbReference>
<dbReference type="GO" id="GO:0019843">
    <property type="term" value="F:rRNA binding"/>
    <property type="evidence" value="ECO:0007669"/>
    <property type="project" value="UniProtKB-UniRule"/>
</dbReference>
<dbReference type="GO" id="GO:0003735">
    <property type="term" value="F:structural constituent of ribosome"/>
    <property type="evidence" value="ECO:0007669"/>
    <property type="project" value="InterPro"/>
</dbReference>
<dbReference type="GO" id="GO:0006412">
    <property type="term" value="P:translation"/>
    <property type="evidence" value="ECO:0007669"/>
    <property type="project" value="UniProtKB-UniRule"/>
</dbReference>
<dbReference type="CDD" id="cd14871">
    <property type="entry name" value="uS7_Chloroplast"/>
    <property type="match status" value="1"/>
</dbReference>
<dbReference type="FunFam" id="1.10.455.10:FF:000001">
    <property type="entry name" value="30S ribosomal protein S7"/>
    <property type="match status" value="1"/>
</dbReference>
<dbReference type="Gene3D" id="1.10.455.10">
    <property type="entry name" value="Ribosomal protein S7 domain"/>
    <property type="match status" value="1"/>
</dbReference>
<dbReference type="HAMAP" id="MF_00480_B">
    <property type="entry name" value="Ribosomal_uS7_B"/>
    <property type="match status" value="1"/>
</dbReference>
<dbReference type="InterPro" id="IPR000235">
    <property type="entry name" value="Ribosomal_uS7"/>
</dbReference>
<dbReference type="InterPro" id="IPR005717">
    <property type="entry name" value="Ribosomal_uS7_bac/org-type"/>
</dbReference>
<dbReference type="InterPro" id="IPR020606">
    <property type="entry name" value="Ribosomal_uS7_CS"/>
</dbReference>
<dbReference type="InterPro" id="IPR023798">
    <property type="entry name" value="Ribosomal_uS7_dom"/>
</dbReference>
<dbReference type="InterPro" id="IPR036823">
    <property type="entry name" value="Ribosomal_uS7_dom_sf"/>
</dbReference>
<dbReference type="NCBIfam" id="TIGR01029">
    <property type="entry name" value="rpsG_bact"/>
    <property type="match status" value="1"/>
</dbReference>
<dbReference type="PANTHER" id="PTHR11205">
    <property type="entry name" value="RIBOSOMAL PROTEIN S7"/>
    <property type="match status" value="1"/>
</dbReference>
<dbReference type="Pfam" id="PF00177">
    <property type="entry name" value="Ribosomal_S7"/>
    <property type="match status" value="1"/>
</dbReference>
<dbReference type="PIRSF" id="PIRSF002122">
    <property type="entry name" value="RPS7p_RPS7a_RPS5e_RPS7o"/>
    <property type="match status" value="1"/>
</dbReference>
<dbReference type="SUPFAM" id="SSF47973">
    <property type="entry name" value="Ribosomal protein S7"/>
    <property type="match status" value="1"/>
</dbReference>
<dbReference type="PROSITE" id="PS00052">
    <property type="entry name" value="RIBOSOMAL_S7"/>
    <property type="match status" value="1"/>
</dbReference>
<sequence>MSRRGTTEKQIEKPDPIYRNRLVNLLVNRILRNGKKSLAYRILYGAMRNIRRATKKNPLSVLRQAVRRVTPNVTVKARRVGGSTYQVPIEIESSQGKALAIRWLLVASKKRPGRNMAFKLSYELIDAARDNGNAVRKREETHRMAEANRAFAHFR</sequence>
<organism>
    <name type="scientific">Anthoceros angustus</name>
    <name type="common">Hornwort</name>
    <name type="synonym">Anthoceros formosae</name>
    <dbReference type="NCBI Taxonomy" id="48387"/>
    <lineage>
        <taxon>Eukaryota</taxon>
        <taxon>Viridiplantae</taxon>
        <taxon>Streptophyta</taxon>
        <taxon>Embryophyta</taxon>
        <taxon>Anthocerotophyta</taxon>
        <taxon>Anthocerotopsida</taxon>
        <taxon>Anthocerotidae</taxon>
        <taxon>Anthocerotales</taxon>
        <taxon>Anthocerotaceae</taxon>
        <taxon>Anthoceros</taxon>
    </lineage>
</organism>
<gene>
    <name type="primary">rps7-A</name>
</gene>
<gene>
    <name type="primary">rps7-B</name>
</gene>
<evidence type="ECO:0000250" key="1"/>
<evidence type="ECO:0000255" key="2">
    <source>
        <dbReference type="HAMAP-Rule" id="MF_00480"/>
    </source>
</evidence>
<evidence type="ECO:0000269" key="3">
    <source>
    </source>
</evidence>
<evidence type="ECO:0000269" key="4">
    <source>
    </source>
</evidence>
<evidence type="ECO:0000305" key="5"/>
<feature type="chain" id="PRO_0000124424" description="Small ribosomal subunit protein uS7cz/uS7cy">
    <location>
        <begin position="1"/>
        <end position="155"/>
    </location>
</feature>
<protein>
    <recommendedName>
        <fullName evidence="2">Small ribosomal subunit protein uS7cz/uS7cy</fullName>
    </recommendedName>
    <alternativeName>
        <fullName>30S ribosomal protein S7, chloroplastic</fullName>
    </alternativeName>
</protein>